<accession>P14868</accession>
<accession>A8K3J2</accession>
<accession>D3DP77</accession>
<accession>Q2TNI3</accession>
<accession>Q32Q69</accession>
<accession>Q53HV4</accession>
<accession>Q53YC5</accession>
<accession>Q68CR9</accession>
<accession>Q9BW52</accession>
<sequence length="501" mass="57136">MPSASASRKSQEKPREIMDAAEDYAKERYGISSMIQSQEKPDRVLVRVRDLTIQKADEVVWVRARVHTSRAKGKQCFLVLRQQQFNVQALVAVGDHASKQMVKFAANINKESIVDVEGVVRKVNQKIGSCTQQDVELHVQKIYVISLAEPRLPLQLDDAVRPEAEGEEEGRATVNQDTRLDNRVIDLRTSTSQAVFRLQSGICHLFRETLINKGFVEIQTPKIISAASEGGANVFTVSYFKNNAYLAQSPQLYKQMCICADFEKVFSIGPVFRAEDSNTHRHLTEFVGLDIEMAFNYHYHEVMEEIADTMVQIFKGLQERFQTEIQTVNKQFPCEPFKFLEPTLRLEYCEALAMLREAGVEMGDEDDLSTPNEKLLGHLVKEKYDTDFYILDKYPLAVRPFYTMPDPRNPKQSNSYDMFMRGEEILSGAQRIHDPQLLTERALHHGIDLEKIKAYIDSFRFGAPPHAGGGIGLERVTMLFLGLHNVRQTSMFPRDPKRLTP</sequence>
<evidence type="ECO:0000250" key="1"/>
<evidence type="ECO:0000250" key="2">
    <source>
        <dbReference type="UniProtKB" id="P15178"/>
    </source>
</evidence>
<evidence type="ECO:0000255" key="3"/>
<evidence type="ECO:0000269" key="4">
    <source>
    </source>
</evidence>
<evidence type="ECO:0000269" key="5">
    <source>
    </source>
</evidence>
<evidence type="ECO:0000269" key="6">
    <source>
    </source>
</evidence>
<evidence type="ECO:0000269" key="7">
    <source>
    </source>
</evidence>
<evidence type="ECO:0000303" key="8">
    <source>
    </source>
</evidence>
<evidence type="ECO:0000305" key="9"/>
<evidence type="ECO:0000312" key="10">
    <source>
        <dbReference type="HGNC" id="HGNC:2678"/>
    </source>
</evidence>
<evidence type="ECO:0007744" key="11">
    <source>
        <dbReference type="PDB" id="4J15"/>
    </source>
</evidence>
<evidence type="ECO:0007744" key="12">
    <source>
    </source>
</evidence>
<evidence type="ECO:0007744" key="13">
    <source>
    </source>
</evidence>
<evidence type="ECO:0007744" key="14">
    <source>
    </source>
</evidence>
<evidence type="ECO:0007829" key="15">
    <source>
        <dbReference type="PDB" id="4J15"/>
    </source>
</evidence>
<evidence type="ECO:0007829" key="16">
    <source>
        <dbReference type="PDB" id="5Y6L"/>
    </source>
</evidence>
<feature type="chain" id="PRO_0000111010" description="Aspartate--tRNA ligase, cytoplasmic">
    <location>
        <begin position="1"/>
        <end position="501"/>
    </location>
</feature>
<feature type="region of interest" description="Aspartate" evidence="1">
    <location>
        <begin position="251"/>
        <end position="254"/>
    </location>
</feature>
<feature type="region of interest" description="Binding site for the 3'-end of tRNA" evidence="3">
    <location>
        <begin position="411"/>
        <end position="415"/>
    </location>
</feature>
<feature type="binding site" evidence="1">
    <location>
        <position position="229"/>
    </location>
    <ligand>
        <name>L-aspartate</name>
        <dbReference type="ChEBI" id="CHEBI:29991"/>
    </ligand>
</feature>
<feature type="binding site" evidence="1">
    <location>
        <begin position="273"/>
        <end position="275"/>
    </location>
    <ligand>
        <name>ATP</name>
        <dbReference type="ChEBI" id="CHEBI:30616"/>
    </ligand>
</feature>
<feature type="binding site" evidence="1">
    <location>
        <position position="273"/>
    </location>
    <ligand>
        <name>L-aspartate</name>
        <dbReference type="ChEBI" id="CHEBI:29991"/>
    </ligand>
</feature>
<feature type="binding site" evidence="1">
    <location>
        <begin position="281"/>
        <end position="283"/>
    </location>
    <ligand>
        <name>ATP</name>
        <dbReference type="ChEBI" id="CHEBI:30616"/>
    </ligand>
</feature>
<feature type="binding site" evidence="1">
    <location>
        <position position="424"/>
    </location>
    <ligand>
        <name>ATP</name>
        <dbReference type="ChEBI" id="CHEBI:30616"/>
    </ligand>
</feature>
<feature type="binding site" evidence="1">
    <location>
        <position position="427"/>
    </location>
    <ligand>
        <name>L-aspartate</name>
        <dbReference type="ChEBI" id="CHEBI:29991"/>
    </ligand>
</feature>
<feature type="binding site" evidence="1">
    <location>
        <position position="431"/>
    </location>
    <ligand>
        <name>L-aspartate</name>
        <dbReference type="ChEBI" id="CHEBI:29991"/>
    </ligand>
</feature>
<feature type="binding site" evidence="1">
    <location>
        <begin position="472"/>
        <end position="475"/>
    </location>
    <ligand>
        <name>ATP</name>
        <dbReference type="ChEBI" id="CHEBI:30616"/>
    </ligand>
</feature>
<feature type="modified residue" description="Phosphothreonine" evidence="14">
    <location>
        <position position="52"/>
    </location>
</feature>
<feature type="modified residue" description="N6-acetyllysine" evidence="12">
    <location>
        <position position="74"/>
    </location>
</feature>
<feature type="modified residue" description="Phosphoserine" evidence="13 14">
    <location>
        <position position="249"/>
    </location>
</feature>
<feature type="modified residue" description="N6-acetyllysine" evidence="12">
    <location>
        <position position="374"/>
    </location>
</feature>
<feature type="modified residue" description="Phosphothreonine; by PKA" evidence="3">
    <location>
        <position position="500"/>
    </location>
</feature>
<feature type="splice variant" id="VSP_056192" description="In isoform 2." evidence="8">
    <location>
        <begin position="1"/>
        <end position="100"/>
    </location>
</feature>
<feature type="sequence variant" id="VAR_070038" description="In HBSL; dbSNP:rs886037635." evidence="7">
    <original>M</original>
    <variation>L</variation>
    <location>
        <position position="256"/>
    </location>
</feature>
<feature type="sequence variant" id="VAR_070039" description="In HBSL; dbSNP:rs369152939." evidence="7">
    <original>A</original>
    <variation>V</variation>
    <location>
        <position position="274"/>
    </location>
</feature>
<feature type="sequence variant" id="VAR_070040" description="In HBSL; dbSNP:rs370064817." evidence="7">
    <original>D</original>
    <variation>Y</variation>
    <location>
        <position position="367"/>
    </location>
</feature>
<feature type="sequence variant" id="VAR_027611" description="In dbSNP:rs1803165.">
    <original>L</original>
    <variation>F</variation>
    <location>
        <position position="426"/>
    </location>
</feature>
<feature type="sequence variant" id="VAR_070041" description="In HBSL; dbSNP:rs587776985." evidence="7">
    <original>R</original>
    <variation>H</variation>
    <location>
        <position position="460"/>
    </location>
</feature>
<feature type="sequence variant" id="VAR_070042" description="In HBSL; dbSNP:rs148806569." evidence="7">
    <original>P</original>
    <variation>L</variation>
    <location>
        <position position="464"/>
    </location>
</feature>
<feature type="sequence variant" id="VAR_070043" description="In HBSL; dbSNP:rs587776984." evidence="7">
    <original>R</original>
    <variation>C</variation>
    <location>
        <position position="487"/>
    </location>
</feature>
<feature type="sequence variant" id="VAR_070044" description="In HBSL; dbSNP:rs147077598." evidence="7">
    <original>R</original>
    <variation>C</variation>
    <location>
        <position position="494"/>
    </location>
</feature>
<feature type="sequence variant" id="VAR_070045" description="In HBSL; dbSNP:rs147077598." evidence="7">
    <original>R</original>
    <variation>G</variation>
    <location>
        <position position="494"/>
    </location>
</feature>
<feature type="sequence conflict" description="In Ref. 1; AAA35567." evidence="9" ref="1">
    <original>SAS</original>
    <variation>TQ</variation>
    <location>
        <begin position="5"/>
        <end position="7"/>
    </location>
</feature>
<feature type="sequence conflict" description="In Ref. 9; AAI07750." evidence="9" ref="9">
    <original>I</original>
    <variation>T</variation>
    <location>
        <position position="31"/>
    </location>
</feature>
<feature type="sequence conflict" description="In Ref. 5; BAD96196." evidence="9" ref="5">
    <original>Q</original>
    <variation>H</variation>
    <location>
        <position position="38"/>
    </location>
</feature>
<feature type="sequence conflict" description="In Ref. 1; AAA35567." evidence="9" ref="1">
    <original>A</original>
    <variation>Q</variation>
    <location>
        <position position="164"/>
    </location>
</feature>
<feature type="sequence conflict" description="In Ref. 2; AAX07827." evidence="9" ref="2">
    <original>Q</original>
    <variation>H</variation>
    <location>
        <position position="312"/>
    </location>
</feature>
<feature type="sequence conflict" description="In Ref. 1; AAA35567." evidence="9" ref="1">
    <original>N</original>
    <variation>K</variation>
    <location>
        <position position="414"/>
    </location>
</feature>
<feature type="sequence conflict" description="In Ref. 1; AAA35567." evidence="9" ref="1">
    <original>I</original>
    <variation>N</variation>
    <location>
        <position position="447"/>
    </location>
</feature>
<feature type="helix" evidence="15">
    <location>
        <begin position="26"/>
        <end position="28"/>
    </location>
</feature>
<feature type="strand" evidence="15">
    <location>
        <begin position="29"/>
        <end position="31"/>
    </location>
</feature>
<feature type="helix" evidence="15">
    <location>
        <begin position="48"/>
        <end position="50"/>
    </location>
</feature>
<feature type="helix" evidence="15">
    <location>
        <begin position="53"/>
        <end position="55"/>
    </location>
</feature>
<feature type="strand" evidence="15">
    <location>
        <begin position="59"/>
        <end position="72"/>
    </location>
</feature>
<feature type="strand" evidence="15">
    <location>
        <begin position="75"/>
        <end position="82"/>
    </location>
</feature>
<feature type="strand" evidence="15">
    <location>
        <begin position="85"/>
        <end position="93"/>
    </location>
</feature>
<feature type="turn" evidence="15">
    <location>
        <begin position="94"/>
        <end position="96"/>
    </location>
</feature>
<feature type="helix" evidence="15">
    <location>
        <begin position="99"/>
        <end position="107"/>
    </location>
</feature>
<feature type="strand" evidence="15">
    <location>
        <begin position="113"/>
        <end position="122"/>
    </location>
</feature>
<feature type="strand" evidence="15">
    <location>
        <begin position="134"/>
        <end position="146"/>
    </location>
</feature>
<feature type="helix" evidence="15">
    <location>
        <begin position="156"/>
        <end position="160"/>
    </location>
</feature>
<feature type="helix" evidence="15">
    <location>
        <begin position="176"/>
        <end position="181"/>
    </location>
</feature>
<feature type="helix" evidence="15">
    <location>
        <begin position="183"/>
        <end position="186"/>
    </location>
</feature>
<feature type="helix" evidence="15">
    <location>
        <begin position="190"/>
        <end position="212"/>
    </location>
</feature>
<feature type="helix" evidence="15">
    <location>
        <begin position="250"/>
        <end position="259"/>
    </location>
</feature>
<feature type="strand" evidence="15">
    <location>
        <begin position="264"/>
        <end position="271"/>
    </location>
</feature>
<feature type="strand" evidence="15">
    <location>
        <begin position="286"/>
        <end position="294"/>
    </location>
</feature>
<feature type="helix" evidence="15">
    <location>
        <begin position="300"/>
        <end position="320"/>
    </location>
</feature>
<feature type="helix" evidence="15">
    <location>
        <begin position="322"/>
        <end position="331"/>
    </location>
</feature>
<feature type="strand" evidence="16">
    <location>
        <begin position="340"/>
        <end position="342"/>
    </location>
</feature>
<feature type="strand" evidence="15">
    <location>
        <begin position="344"/>
        <end position="347"/>
    </location>
</feature>
<feature type="helix" evidence="15">
    <location>
        <begin position="348"/>
        <end position="357"/>
    </location>
</feature>
<feature type="helix" evidence="15">
    <location>
        <begin position="370"/>
        <end position="384"/>
    </location>
</feature>
<feature type="strand" evidence="15">
    <location>
        <begin position="387"/>
        <end position="392"/>
    </location>
</feature>
<feature type="helix" evidence="15">
    <location>
        <begin position="396"/>
        <end position="398"/>
    </location>
</feature>
<feature type="strand" evidence="15">
    <location>
        <begin position="407"/>
        <end position="409"/>
    </location>
</feature>
<feature type="strand" evidence="15">
    <location>
        <begin position="412"/>
        <end position="420"/>
    </location>
</feature>
<feature type="strand" evidence="15">
    <location>
        <begin position="423"/>
        <end position="431"/>
    </location>
</feature>
<feature type="helix" evidence="15">
    <location>
        <begin position="435"/>
        <end position="444"/>
    </location>
</feature>
<feature type="helix" evidence="15">
    <location>
        <begin position="450"/>
        <end position="452"/>
    </location>
</feature>
<feature type="helix" evidence="15">
    <location>
        <begin position="453"/>
        <end position="457"/>
    </location>
</feature>
<feature type="turn" evidence="15">
    <location>
        <begin position="458"/>
        <end position="461"/>
    </location>
</feature>
<feature type="strand" evidence="15">
    <location>
        <begin position="466"/>
        <end position="472"/>
    </location>
</feature>
<feature type="helix" evidence="15">
    <location>
        <begin position="473"/>
        <end position="481"/>
    </location>
</feature>
<feature type="helix" evidence="15">
    <location>
        <begin position="486"/>
        <end position="489"/>
    </location>
</feature>
<dbReference type="EC" id="6.1.1.12" evidence="2"/>
<dbReference type="EMBL" id="J05032">
    <property type="protein sequence ID" value="AAA35567.1"/>
    <property type="molecule type" value="mRNA"/>
</dbReference>
<dbReference type="EMBL" id="AY762100">
    <property type="protein sequence ID" value="AAX07827.1"/>
    <property type="molecule type" value="mRNA"/>
</dbReference>
<dbReference type="EMBL" id="BT006710">
    <property type="protein sequence ID" value="AAP35356.1"/>
    <property type="molecule type" value="mRNA"/>
</dbReference>
<dbReference type="EMBL" id="AK290607">
    <property type="protein sequence ID" value="BAF83296.1"/>
    <property type="molecule type" value="mRNA"/>
</dbReference>
<dbReference type="EMBL" id="AK222476">
    <property type="protein sequence ID" value="BAD96196.1"/>
    <property type="molecule type" value="mRNA"/>
</dbReference>
<dbReference type="EMBL" id="CR749809">
    <property type="protein sequence ID" value="CAH18669.1"/>
    <property type="molecule type" value="mRNA"/>
</dbReference>
<dbReference type="EMBL" id="AC011999">
    <property type="status" value="NOT_ANNOTATED_CDS"/>
    <property type="molecule type" value="Genomic_DNA"/>
</dbReference>
<dbReference type="EMBL" id="AC093391">
    <property type="status" value="NOT_ANNOTATED_CDS"/>
    <property type="molecule type" value="Genomic_DNA"/>
</dbReference>
<dbReference type="EMBL" id="CH471058">
    <property type="protein sequence ID" value="EAX11617.1"/>
    <property type="molecule type" value="Genomic_DNA"/>
</dbReference>
<dbReference type="EMBL" id="CH471058">
    <property type="protein sequence ID" value="EAX11620.1"/>
    <property type="molecule type" value="Genomic_DNA"/>
</dbReference>
<dbReference type="EMBL" id="BC000629">
    <property type="protein sequence ID" value="AAH00629.1"/>
    <property type="molecule type" value="mRNA"/>
</dbReference>
<dbReference type="EMBL" id="BC107749">
    <property type="protein sequence ID" value="AAI07750.1"/>
    <property type="molecule type" value="mRNA"/>
</dbReference>
<dbReference type="CCDS" id="CCDS2180.1">
    <molecule id="P14868-1"/>
</dbReference>
<dbReference type="PIR" id="A34393">
    <property type="entry name" value="SYHUDT"/>
</dbReference>
<dbReference type="RefSeq" id="NP_001280241.1">
    <molecule id="P14868-2"/>
    <property type="nucleotide sequence ID" value="NM_001293312.1"/>
</dbReference>
<dbReference type="RefSeq" id="NP_001340.2">
    <molecule id="P14868-1"/>
    <property type="nucleotide sequence ID" value="NM_001349.3"/>
</dbReference>
<dbReference type="PDB" id="4J15">
    <property type="method" value="X-ray"/>
    <property type="resolution" value="2.24 A"/>
    <property type="chains" value="A/B=1-501"/>
</dbReference>
<dbReference type="PDB" id="5Y6L">
    <property type="method" value="X-ray"/>
    <property type="resolution" value="2.90 A"/>
    <property type="chains" value="E=1-501"/>
</dbReference>
<dbReference type="PDB" id="6IY6">
    <property type="method" value="X-ray"/>
    <property type="resolution" value="3.60 A"/>
    <property type="chains" value="A/B/G/H=21-501"/>
</dbReference>
<dbReference type="PDBsum" id="4J15"/>
<dbReference type="PDBsum" id="5Y6L"/>
<dbReference type="PDBsum" id="6IY6"/>
<dbReference type="BMRB" id="P14868"/>
<dbReference type="SMR" id="P14868"/>
<dbReference type="BioGRID" id="107984">
    <property type="interactions" value="357"/>
</dbReference>
<dbReference type="ComplexPortal" id="CPX-2469">
    <property type="entry name" value="Multiaminoacyl-tRNA synthetase complex"/>
</dbReference>
<dbReference type="CORUM" id="P14868"/>
<dbReference type="FunCoup" id="P14868">
    <property type="interactions" value="2051"/>
</dbReference>
<dbReference type="IntAct" id="P14868">
    <property type="interactions" value="87"/>
</dbReference>
<dbReference type="MINT" id="P14868"/>
<dbReference type="STRING" id="9606.ENSP00000264161"/>
<dbReference type="DrugBank" id="DB00128">
    <property type="generic name" value="Aspartic acid"/>
</dbReference>
<dbReference type="DrugCentral" id="P14868"/>
<dbReference type="GlyGen" id="P14868">
    <property type="glycosylation" value="1 site, 1 O-linked glycan (1 site)"/>
</dbReference>
<dbReference type="iPTMnet" id="P14868"/>
<dbReference type="MetOSite" id="P14868"/>
<dbReference type="PhosphoSitePlus" id="P14868"/>
<dbReference type="SwissPalm" id="P14868"/>
<dbReference type="BioMuta" id="DARS"/>
<dbReference type="DMDM" id="20178330"/>
<dbReference type="OGP" id="P14868"/>
<dbReference type="REPRODUCTION-2DPAGE" id="IPI00216951"/>
<dbReference type="jPOST" id="P14868"/>
<dbReference type="MassIVE" id="P14868"/>
<dbReference type="PaxDb" id="9606-ENSP00000264161"/>
<dbReference type="PeptideAtlas" id="P14868"/>
<dbReference type="ProteomicsDB" id="53092">
    <molecule id="P14868-1"/>
</dbReference>
<dbReference type="ProteomicsDB" id="66028"/>
<dbReference type="Pumba" id="P14868"/>
<dbReference type="ABCD" id="P14868">
    <property type="antibodies" value="1 sequenced antibody"/>
</dbReference>
<dbReference type="Antibodypedia" id="18737">
    <property type="antibodies" value="209 antibodies from 30 providers"/>
</dbReference>
<dbReference type="DNASU" id="1615"/>
<dbReference type="Ensembl" id="ENST00000264161.9">
    <molecule id="P14868-1"/>
    <property type="protein sequence ID" value="ENSP00000264161.4"/>
    <property type="gene ID" value="ENSG00000115866.11"/>
</dbReference>
<dbReference type="GeneID" id="1615"/>
<dbReference type="KEGG" id="hsa:1615"/>
<dbReference type="MANE-Select" id="ENST00000264161.9">
    <property type="protein sequence ID" value="ENSP00000264161.4"/>
    <property type="RefSeq nucleotide sequence ID" value="NM_001349.4"/>
    <property type="RefSeq protein sequence ID" value="NP_001340.2"/>
</dbReference>
<dbReference type="UCSC" id="uc002tux.2">
    <molecule id="P14868-1"/>
    <property type="organism name" value="human"/>
</dbReference>
<dbReference type="AGR" id="HGNC:2678"/>
<dbReference type="CTD" id="1615"/>
<dbReference type="DisGeNET" id="1615"/>
<dbReference type="GeneCards" id="DARS1"/>
<dbReference type="HGNC" id="HGNC:2678">
    <property type="gene designation" value="DARS1"/>
</dbReference>
<dbReference type="HPA" id="ENSG00000115866">
    <property type="expression patterns" value="Low tissue specificity"/>
</dbReference>
<dbReference type="MalaCards" id="DARS1"/>
<dbReference type="MIM" id="603084">
    <property type="type" value="gene"/>
</dbReference>
<dbReference type="MIM" id="615281">
    <property type="type" value="phenotype"/>
</dbReference>
<dbReference type="neXtProt" id="NX_P14868"/>
<dbReference type="OpenTargets" id="ENSG00000115866"/>
<dbReference type="Orphanet" id="363412">
    <property type="disease" value="Hypomyelination with brain stem and spinal cord involvement and leg spasticity"/>
</dbReference>
<dbReference type="PharmGKB" id="PA27146"/>
<dbReference type="VEuPathDB" id="HostDB:ENSG00000115866"/>
<dbReference type="eggNOG" id="KOG0556">
    <property type="taxonomic scope" value="Eukaryota"/>
</dbReference>
<dbReference type="GeneTree" id="ENSGT01030000234618"/>
<dbReference type="HOGENOM" id="CLU_004553_2_1_1"/>
<dbReference type="InParanoid" id="P14868"/>
<dbReference type="OMA" id="WVHEIRD"/>
<dbReference type="OrthoDB" id="372395at2759"/>
<dbReference type="PAN-GO" id="P14868">
    <property type="GO annotations" value="5 GO annotations based on evolutionary models"/>
</dbReference>
<dbReference type="PhylomeDB" id="P14868"/>
<dbReference type="TreeFam" id="TF105676"/>
<dbReference type="BRENDA" id="6.1.1.12">
    <property type="organism ID" value="2681"/>
</dbReference>
<dbReference type="PathwayCommons" id="P14868"/>
<dbReference type="Reactome" id="R-HSA-2408522">
    <property type="pathway name" value="Selenoamino acid metabolism"/>
</dbReference>
<dbReference type="Reactome" id="R-HSA-379716">
    <property type="pathway name" value="Cytosolic tRNA aminoacylation"/>
</dbReference>
<dbReference type="Reactome" id="R-HSA-9856649">
    <property type="pathway name" value="Transcriptional and post-translational regulation of MITF-M expression and activity"/>
</dbReference>
<dbReference type="SignaLink" id="P14868"/>
<dbReference type="SIGNOR" id="P14868"/>
<dbReference type="BioGRID-ORCS" id="1615">
    <property type="hits" value="830 hits in 1143 CRISPR screens"/>
</dbReference>
<dbReference type="CD-CODE" id="91857CE7">
    <property type="entry name" value="Nucleolus"/>
</dbReference>
<dbReference type="CD-CODE" id="FB4E32DD">
    <property type="entry name" value="Presynaptic clusters and postsynaptic densities"/>
</dbReference>
<dbReference type="ChiTaRS" id="DARS">
    <property type="organism name" value="human"/>
</dbReference>
<dbReference type="EvolutionaryTrace" id="P14868"/>
<dbReference type="GeneWiki" id="DARS_(gene)"/>
<dbReference type="GenomeRNAi" id="1615"/>
<dbReference type="Pharos" id="P14868">
    <property type="development level" value="Tbio"/>
</dbReference>
<dbReference type="PRO" id="PR:P14868"/>
<dbReference type="Proteomes" id="UP000005640">
    <property type="component" value="Chromosome 2"/>
</dbReference>
<dbReference type="RNAct" id="P14868">
    <property type="molecule type" value="protein"/>
</dbReference>
<dbReference type="Bgee" id="ENSG00000115866">
    <property type="expression patterns" value="Expressed in oocyte and 215 other cell types or tissues"/>
</dbReference>
<dbReference type="ExpressionAtlas" id="P14868">
    <property type="expression patterns" value="baseline and differential"/>
</dbReference>
<dbReference type="GO" id="GO:0017101">
    <property type="term" value="C:aminoacyl-tRNA synthetase multienzyme complex"/>
    <property type="evidence" value="ECO:0000314"/>
    <property type="project" value="UniProtKB"/>
</dbReference>
<dbReference type="GO" id="GO:0005737">
    <property type="term" value="C:cytoplasm"/>
    <property type="evidence" value="ECO:0000304"/>
    <property type="project" value="ProtInc"/>
</dbReference>
<dbReference type="GO" id="GO:0005829">
    <property type="term" value="C:cytosol"/>
    <property type="evidence" value="ECO:0000314"/>
    <property type="project" value="HPA"/>
</dbReference>
<dbReference type="GO" id="GO:0070062">
    <property type="term" value="C:extracellular exosome"/>
    <property type="evidence" value="ECO:0007005"/>
    <property type="project" value="UniProtKB"/>
</dbReference>
<dbReference type="GO" id="GO:0016020">
    <property type="term" value="C:membrane"/>
    <property type="evidence" value="ECO:0007005"/>
    <property type="project" value="UniProtKB"/>
</dbReference>
<dbReference type="GO" id="GO:0045202">
    <property type="term" value="C:synapse"/>
    <property type="evidence" value="ECO:0007669"/>
    <property type="project" value="Ensembl"/>
</dbReference>
<dbReference type="GO" id="GO:0004046">
    <property type="term" value="F:aminoacylase activity"/>
    <property type="evidence" value="ECO:0000304"/>
    <property type="project" value="ProtInc"/>
</dbReference>
<dbReference type="GO" id="GO:0004815">
    <property type="term" value="F:aspartate-tRNA ligase activity"/>
    <property type="evidence" value="ECO:0000318"/>
    <property type="project" value="GO_Central"/>
</dbReference>
<dbReference type="GO" id="GO:0005524">
    <property type="term" value="F:ATP binding"/>
    <property type="evidence" value="ECO:0007669"/>
    <property type="project" value="UniProtKB-KW"/>
</dbReference>
<dbReference type="GO" id="GO:0003723">
    <property type="term" value="F:RNA binding"/>
    <property type="evidence" value="ECO:0007005"/>
    <property type="project" value="UniProtKB"/>
</dbReference>
<dbReference type="GO" id="GO:0006422">
    <property type="term" value="P:aspartyl-tRNA aminoacylation"/>
    <property type="evidence" value="ECO:0000318"/>
    <property type="project" value="GO_Central"/>
</dbReference>
<dbReference type="GO" id="GO:0065003">
    <property type="term" value="P:protein-containing complex assembly"/>
    <property type="evidence" value="ECO:0000304"/>
    <property type="project" value="ProtInc"/>
</dbReference>
<dbReference type="GO" id="GO:0006412">
    <property type="term" value="P:translation"/>
    <property type="evidence" value="ECO:0000304"/>
    <property type="project" value="ProtInc"/>
</dbReference>
<dbReference type="CDD" id="cd04320">
    <property type="entry name" value="AspRS_cyto_N"/>
    <property type="match status" value="1"/>
</dbReference>
<dbReference type="CDD" id="cd00776">
    <property type="entry name" value="AsxRS_core"/>
    <property type="match status" value="1"/>
</dbReference>
<dbReference type="FunFam" id="2.40.50.140:FF:000144">
    <property type="entry name" value="Aspartate--tRNA ligase, cytoplasmic"/>
    <property type="match status" value="1"/>
</dbReference>
<dbReference type="FunFam" id="3.30.930.10:FF:000013">
    <property type="entry name" value="Aspartate--tRNA ligase, cytoplasmic"/>
    <property type="match status" value="1"/>
</dbReference>
<dbReference type="Gene3D" id="3.30.930.10">
    <property type="entry name" value="Bira Bifunctional Protein, Domain 2"/>
    <property type="match status" value="1"/>
</dbReference>
<dbReference type="Gene3D" id="2.40.50.140">
    <property type="entry name" value="Nucleic acid-binding proteins"/>
    <property type="match status" value="1"/>
</dbReference>
<dbReference type="HAMAP" id="MF_02075">
    <property type="entry name" value="Asp_tRNA_synth_type2"/>
    <property type="match status" value="1"/>
</dbReference>
<dbReference type="InterPro" id="IPR004364">
    <property type="entry name" value="Aa-tRNA-synt_II"/>
</dbReference>
<dbReference type="InterPro" id="IPR006195">
    <property type="entry name" value="aa-tRNA-synth_II"/>
</dbReference>
<dbReference type="InterPro" id="IPR045864">
    <property type="entry name" value="aa-tRNA-synth_II/BPL/LPL"/>
</dbReference>
<dbReference type="InterPro" id="IPR004523">
    <property type="entry name" value="Asp-tRNA_synthase_2"/>
</dbReference>
<dbReference type="InterPro" id="IPR002312">
    <property type="entry name" value="Asp/Asn-tRNA-synth_IIb"/>
</dbReference>
<dbReference type="InterPro" id="IPR012340">
    <property type="entry name" value="NA-bd_OB-fold"/>
</dbReference>
<dbReference type="InterPro" id="IPR004365">
    <property type="entry name" value="NA-bd_OB_tRNA"/>
</dbReference>
<dbReference type="NCBIfam" id="TIGR00458">
    <property type="entry name" value="aspS_nondisc"/>
    <property type="match status" value="1"/>
</dbReference>
<dbReference type="NCBIfam" id="NF003483">
    <property type="entry name" value="PRK05159.1"/>
    <property type="match status" value="1"/>
</dbReference>
<dbReference type="PANTHER" id="PTHR43450:SF1">
    <property type="entry name" value="ASPARTATE--TRNA LIGASE, CYTOPLASMIC"/>
    <property type="match status" value="1"/>
</dbReference>
<dbReference type="PANTHER" id="PTHR43450">
    <property type="entry name" value="ASPARTYL-TRNA SYNTHETASE"/>
    <property type="match status" value="1"/>
</dbReference>
<dbReference type="Pfam" id="PF00152">
    <property type="entry name" value="tRNA-synt_2"/>
    <property type="match status" value="1"/>
</dbReference>
<dbReference type="Pfam" id="PF01336">
    <property type="entry name" value="tRNA_anti-codon"/>
    <property type="match status" value="1"/>
</dbReference>
<dbReference type="PRINTS" id="PR01042">
    <property type="entry name" value="TRNASYNTHASP"/>
</dbReference>
<dbReference type="SUPFAM" id="SSF55681">
    <property type="entry name" value="Class II aaRS and biotin synthetases"/>
    <property type="match status" value="1"/>
</dbReference>
<dbReference type="SUPFAM" id="SSF50249">
    <property type="entry name" value="Nucleic acid-binding proteins"/>
    <property type="match status" value="1"/>
</dbReference>
<dbReference type="PROSITE" id="PS50862">
    <property type="entry name" value="AA_TRNA_LIGASE_II"/>
    <property type="match status" value="1"/>
</dbReference>
<organism>
    <name type="scientific">Homo sapiens</name>
    <name type="common">Human</name>
    <dbReference type="NCBI Taxonomy" id="9606"/>
    <lineage>
        <taxon>Eukaryota</taxon>
        <taxon>Metazoa</taxon>
        <taxon>Chordata</taxon>
        <taxon>Craniata</taxon>
        <taxon>Vertebrata</taxon>
        <taxon>Euteleostomi</taxon>
        <taxon>Mammalia</taxon>
        <taxon>Eutheria</taxon>
        <taxon>Euarchontoglires</taxon>
        <taxon>Primates</taxon>
        <taxon>Haplorrhini</taxon>
        <taxon>Catarrhini</taxon>
        <taxon>Hominidae</taxon>
        <taxon>Homo</taxon>
    </lineage>
</organism>
<keyword id="KW-0002">3D-structure</keyword>
<keyword id="KW-0007">Acetylation</keyword>
<keyword id="KW-0025">Alternative splicing</keyword>
<keyword id="KW-0030">Aminoacyl-tRNA synthetase</keyword>
<keyword id="KW-0067">ATP-binding</keyword>
<keyword id="KW-0963">Cytoplasm</keyword>
<keyword id="KW-0225">Disease variant</keyword>
<keyword id="KW-0436">Ligase</keyword>
<keyword id="KW-0547">Nucleotide-binding</keyword>
<keyword id="KW-0597">Phosphoprotein</keyword>
<keyword id="KW-0648">Protein biosynthesis</keyword>
<keyword id="KW-1267">Proteomics identification</keyword>
<keyword id="KW-1185">Reference proteome</keyword>
<reference key="1">
    <citation type="journal article" date="1989" name="J. Biol. Chem.">
        <title>cDNA sequence, predicted primary structure, and evolving amphiphilic helix of human aspartyl-tRNA synthetase.</title>
        <authorList>
            <person name="Jacobo-Molina A."/>
            <person name="Peterson R."/>
            <person name="Yang D.C.H."/>
        </authorList>
    </citation>
    <scope>NUCLEOTIDE SEQUENCE [MRNA] (ISOFORM 1)</scope>
</reference>
<reference key="2">
    <citation type="submission" date="2004-09" db="EMBL/GenBank/DDBJ databases">
        <title>Identification of a cell proliferation-inducing gene.</title>
        <authorList>
            <person name="Kim J.W."/>
        </authorList>
    </citation>
    <scope>NUCLEOTIDE SEQUENCE [LARGE SCALE MRNA] (ISOFORM 1)</scope>
</reference>
<reference key="3">
    <citation type="submission" date="2003-05" db="EMBL/GenBank/DDBJ databases">
        <title>Cloning of human full-length CDSs in BD Creator(TM) system donor vector.</title>
        <authorList>
            <person name="Kalnine N."/>
            <person name="Chen X."/>
            <person name="Rolfs A."/>
            <person name="Halleck A."/>
            <person name="Hines L."/>
            <person name="Eisenstein S."/>
            <person name="Koundinya M."/>
            <person name="Raphael J."/>
            <person name="Moreira D."/>
            <person name="Kelley T."/>
            <person name="LaBaer J."/>
            <person name="Lin Y."/>
            <person name="Phelan M."/>
            <person name="Farmer A."/>
        </authorList>
    </citation>
    <scope>NUCLEOTIDE SEQUENCE [LARGE SCALE MRNA] (ISOFORM 1)</scope>
</reference>
<reference key="4">
    <citation type="journal article" date="2004" name="Nat. Genet.">
        <title>Complete sequencing and characterization of 21,243 full-length human cDNAs.</title>
        <authorList>
            <person name="Ota T."/>
            <person name="Suzuki Y."/>
            <person name="Nishikawa T."/>
            <person name="Otsuki T."/>
            <person name="Sugiyama T."/>
            <person name="Irie R."/>
            <person name="Wakamatsu A."/>
            <person name="Hayashi K."/>
            <person name="Sato H."/>
            <person name="Nagai K."/>
            <person name="Kimura K."/>
            <person name="Makita H."/>
            <person name="Sekine M."/>
            <person name="Obayashi M."/>
            <person name="Nishi T."/>
            <person name="Shibahara T."/>
            <person name="Tanaka T."/>
            <person name="Ishii S."/>
            <person name="Yamamoto J."/>
            <person name="Saito K."/>
            <person name="Kawai Y."/>
            <person name="Isono Y."/>
            <person name="Nakamura Y."/>
            <person name="Nagahari K."/>
            <person name="Murakami K."/>
            <person name="Yasuda T."/>
            <person name="Iwayanagi T."/>
            <person name="Wagatsuma M."/>
            <person name="Shiratori A."/>
            <person name="Sudo H."/>
            <person name="Hosoiri T."/>
            <person name="Kaku Y."/>
            <person name="Kodaira H."/>
            <person name="Kondo H."/>
            <person name="Sugawara M."/>
            <person name="Takahashi M."/>
            <person name="Kanda K."/>
            <person name="Yokoi T."/>
            <person name="Furuya T."/>
            <person name="Kikkawa E."/>
            <person name="Omura Y."/>
            <person name="Abe K."/>
            <person name="Kamihara K."/>
            <person name="Katsuta N."/>
            <person name="Sato K."/>
            <person name="Tanikawa M."/>
            <person name="Yamazaki M."/>
            <person name="Ninomiya K."/>
            <person name="Ishibashi T."/>
            <person name="Yamashita H."/>
            <person name="Murakawa K."/>
            <person name="Fujimori K."/>
            <person name="Tanai H."/>
            <person name="Kimata M."/>
            <person name="Watanabe M."/>
            <person name="Hiraoka S."/>
            <person name="Chiba Y."/>
            <person name="Ishida S."/>
            <person name="Ono Y."/>
            <person name="Takiguchi S."/>
            <person name="Watanabe S."/>
            <person name="Yosida M."/>
            <person name="Hotuta T."/>
            <person name="Kusano J."/>
            <person name="Kanehori K."/>
            <person name="Takahashi-Fujii A."/>
            <person name="Hara H."/>
            <person name="Tanase T.-O."/>
            <person name="Nomura Y."/>
            <person name="Togiya S."/>
            <person name="Komai F."/>
            <person name="Hara R."/>
            <person name="Takeuchi K."/>
            <person name="Arita M."/>
            <person name="Imose N."/>
            <person name="Musashino K."/>
            <person name="Yuuki H."/>
            <person name="Oshima A."/>
            <person name="Sasaki N."/>
            <person name="Aotsuka S."/>
            <person name="Yoshikawa Y."/>
            <person name="Matsunawa H."/>
            <person name="Ichihara T."/>
            <person name="Shiohata N."/>
            <person name="Sano S."/>
            <person name="Moriya S."/>
            <person name="Momiyama H."/>
            <person name="Satoh N."/>
            <person name="Takami S."/>
            <person name="Terashima Y."/>
            <person name="Suzuki O."/>
            <person name="Nakagawa S."/>
            <person name="Senoh A."/>
            <person name="Mizoguchi H."/>
            <person name="Goto Y."/>
            <person name="Shimizu F."/>
            <person name="Wakebe H."/>
            <person name="Hishigaki H."/>
            <person name="Watanabe T."/>
            <person name="Sugiyama A."/>
            <person name="Takemoto M."/>
            <person name="Kawakami B."/>
            <person name="Yamazaki M."/>
            <person name="Watanabe K."/>
            <person name="Kumagai A."/>
            <person name="Itakura S."/>
            <person name="Fukuzumi Y."/>
            <person name="Fujimori Y."/>
            <person name="Komiyama M."/>
            <person name="Tashiro H."/>
            <person name="Tanigami A."/>
            <person name="Fujiwara T."/>
            <person name="Ono T."/>
            <person name="Yamada K."/>
            <person name="Fujii Y."/>
            <person name="Ozaki K."/>
            <person name="Hirao M."/>
            <person name="Ohmori Y."/>
            <person name="Kawabata A."/>
            <person name="Hikiji T."/>
            <person name="Kobatake N."/>
            <person name="Inagaki H."/>
            <person name="Ikema Y."/>
            <person name="Okamoto S."/>
            <person name="Okitani R."/>
            <person name="Kawakami T."/>
            <person name="Noguchi S."/>
            <person name="Itoh T."/>
            <person name="Shigeta K."/>
            <person name="Senba T."/>
            <person name="Matsumura K."/>
            <person name="Nakajima Y."/>
            <person name="Mizuno T."/>
            <person name="Morinaga M."/>
            <person name="Sasaki M."/>
            <person name="Togashi T."/>
            <person name="Oyama M."/>
            <person name="Hata H."/>
            <person name="Watanabe M."/>
            <person name="Komatsu T."/>
            <person name="Mizushima-Sugano J."/>
            <person name="Satoh T."/>
            <person name="Shirai Y."/>
            <person name="Takahashi Y."/>
            <person name="Nakagawa K."/>
            <person name="Okumura K."/>
            <person name="Nagase T."/>
            <person name="Nomura N."/>
            <person name="Kikuchi H."/>
            <person name="Masuho Y."/>
            <person name="Yamashita R."/>
            <person name="Nakai K."/>
            <person name="Yada T."/>
            <person name="Nakamura Y."/>
            <person name="Ohara O."/>
            <person name="Isogai T."/>
            <person name="Sugano S."/>
        </authorList>
    </citation>
    <scope>NUCLEOTIDE SEQUENCE [LARGE SCALE MRNA] (ISOFORM 1)</scope>
    <source>
        <tissue>Heart</tissue>
    </source>
</reference>
<reference key="5">
    <citation type="submission" date="2005-04" db="EMBL/GenBank/DDBJ databases">
        <authorList>
            <person name="Suzuki Y."/>
            <person name="Sugano S."/>
            <person name="Totoki Y."/>
            <person name="Toyoda A."/>
            <person name="Takeda T."/>
            <person name="Sakaki Y."/>
            <person name="Tanaka A."/>
            <person name="Yokoyama S."/>
        </authorList>
    </citation>
    <scope>NUCLEOTIDE SEQUENCE [LARGE SCALE MRNA] (ISOFORM 1)</scope>
    <source>
        <tissue>Adipose tissue</tissue>
    </source>
</reference>
<reference key="6">
    <citation type="journal article" date="2007" name="BMC Genomics">
        <title>The full-ORF clone resource of the German cDNA consortium.</title>
        <authorList>
            <person name="Bechtel S."/>
            <person name="Rosenfelder H."/>
            <person name="Duda A."/>
            <person name="Schmidt C.P."/>
            <person name="Ernst U."/>
            <person name="Wellenreuther R."/>
            <person name="Mehrle A."/>
            <person name="Schuster C."/>
            <person name="Bahr A."/>
            <person name="Bloecker H."/>
            <person name="Heubner D."/>
            <person name="Hoerlein A."/>
            <person name="Michel G."/>
            <person name="Wedler H."/>
            <person name="Koehrer K."/>
            <person name="Ottenwaelder B."/>
            <person name="Poustka A."/>
            <person name="Wiemann S."/>
            <person name="Schupp I."/>
        </authorList>
    </citation>
    <scope>NUCLEOTIDE SEQUENCE [LARGE SCALE MRNA] (ISOFORM 2)</scope>
    <source>
        <tissue>Embryo</tissue>
    </source>
</reference>
<reference key="7">
    <citation type="journal article" date="2005" name="Nature">
        <title>Generation and annotation of the DNA sequences of human chromosomes 2 and 4.</title>
        <authorList>
            <person name="Hillier L.W."/>
            <person name="Graves T.A."/>
            <person name="Fulton R.S."/>
            <person name="Fulton L.A."/>
            <person name="Pepin K.H."/>
            <person name="Minx P."/>
            <person name="Wagner-McPherson C."/>
            <person name="Layman D."/>
            <person name="Wylie K."/>
            <person name="Sekhon M."/>
            <person name="Becker M.C."/>
            <person name="Fewell G.A."/>
            <person name="Delehaunty K.D."/>
            <person name="Miner T.L."/>
            <person name="Nash W.E."/>
            <person name="Kremitzki C."/>
            <person name="Oddy L."/>
            <person name="Du H."/>
            <person name="Sun H."/>
            <person name="Bradshaw-Cordum H."/>
            <person name="Ali J."/>
            <person name="Carter J."/>
            <person name="Cordes M."/>
            <person name="Harris A."/>
            <person name="Isak A."/>
            <person name="van Brunt A."/>
            <person name="Nguyen C."/>
            <person name="Du F."/>
            <person name="Courtney L."/>
            <person name="Kalicki J."/>
            <person name="Ozersky P."/>
            <person name="Abbott S."/>
            <person name="Armstrong J."/>
            <person name="Belter E.A."/>
            <person name="Caruso L."/>
            <person name="Cedroni M."/>
            <person name="Cotton M."/>
            <person name="Davidson T."/>
            <person name="Desai A."/>
            <person name="Elliott G."/>
            <person name="Erb T."/>
            <person name="Fronick C."/>
            <person name="Gaige T."/>
            <person name="Haakenson W."/>
            <person name="Haglund K."/>
            <person name="Holmes A."/>
            <person name="Harkins R."/>
            <person name="Kim K."/>
            <person name="Kruchowski S.S."/>
            <person name="Strong C.M."/>
            <person name="Grewal N."/>
            <person name="Goyea E."/>
            <person name="Hou S."/>
            <person name="Levy A."/>
            <person name="Martinka S."/>
            <person name="Mead K."/>
            <person name="McLellan M.D."/>
            <person name="Meyer R."/>
            <person name="Randall-Maher J."/>
            <person name="Tomlinson C."/>
            <person name="Dauphin-Kohlberg S."/>
            <person name="Kozlowicz-Reilly A."/>
            <person name="Shah N."/>
            <person name="Swearengen-Shahid S."/>
            <person name="Snider J."/>
            <person name="Strong J.T."/>
            <person name="Thompson J."/>
            <person name="Yoakum M."/>
            <person name="Leonard S."/>
            <person name="Pearman C."/>
            <person name="Trani L."/>
            <person name="Radionenko M."/>
            <person name="Waligorski J.E."/>
            <person name="Wang C."/>
            <person name="Rock S.M."/>
            <person name="Tin-Wollam A.-M."/>
            <person name="Maupin R."/>
            <person name="Latreille P."/>
            <person name="Wendl M.C."/>
            <person name="Yang S.-P."/>
            <person name="Pohl C."/>
            <person name="Wallis J.W."/>
            <person name="Spieth J."/>
            <person name="Bieri T.A."/>
            <person name="Berkowicz N."/>
            <person name="Nelson J.O."/>
            <person name="Osborne J."/>
            <person name="Ding L."/>
            <person name="Meyer R."/>
            <person name="Sabo A."/>
            <person name="Shotland Y."/>
            <person name="Sinha P."/>
            <person name="Wohldmann P.E."/>
            <person name="Cook L.L."/>
            <person name="Hickenbotham M.T."/>
            <person name="Eldred J."/>
            <person name="Williams D."/>
            <person name="Jones T.A."/>
            <person name="She X."/>
            <person name="Ciccarelli F.D."/>
            <person name="Izaurralde E."/>
            <person name="Taylor J."/>
            <person name="Schmutz J."/>
            <person name="Myers R.M."/>
            <person name="Cox D.R."/>
            <person name="Huang X."/>
            <person name="McPherson J.D."/>
            <person name="Mardis E.R."/>
            <person name="Clifton S.W."/>
            <person name="Warren W.C."/>
            <person name="Chinwalla A.T."/>
            <person name="Eddy S.R."/>
            <person name="Marra M.A."/>
            <person name="Ovcharenko I."/>
            <person name="Furey T.S."/>
            <person name="Miller W."/>
            <person name="Eichler E.E."/>
            <person name="Bork P."/>
            <person name="Suyama M."/>
            <person name="Torrents D."/>
            <person name="Waterston R.H."/>
            <person name="Wilson R.K."/>
        </authorList>
    </citation>
    <scope>NUCLEOTIDE SEQUENCE [LARGE SCALE GENOMIC DNA]</scope>
</reference>
<reference key="8">
    <citation type="submission" date="2005-09" db="EMBL/GenBank/DDBJ databases">
        <authorList>
            <person name="Mural R.J."/>
            <person name="Istrail S."/>
            <person name="Sutton G.G."/>
            <person name="Florea L."/>
            <person name="Halpern A.L."/>
            <person name="Mobarry C.M."/>
            <person name="Lippert R."/>
            <person name="Walenz B."/>
            <person name="Shatkay H."/>
            <person name="Dew I."/>
            <person name="Miller J.R."/>
            <person name="Flanigan M.J."/>
            <person name="Edwards N.J."/>
            <person name="Bolanos R."/>
            <person name="Fasulo D."/>
            <person name="Halldorsson B.V."/>
            <person name="Hannenhalli S."/>
            <person name="Turner R."/>
            <person name="Yooseph S."/>
            <person name="Lu F."/>
            <person name="Nusskern D.R."/>
            <person name="Shue B.C."/>
            <person name="Zheng X.H."/>
            <person name="Zhong F."/>
            <person name="Delcher A.L."/>
            <person name="Huson D.H."/>
            <person name="Kravitz S.A."/>
            <person name="Mouchard L."/>
            <person name="Reinert K."/>
            <person name="Remington K.A."/>
            <person name="Clark A.G."/>
            <person name="Waterman M.S."/>
            <person name="Eichler E.E."/>
            <person name="Adams M.D."/>
            <person name="Hunkapiller M.W."/>
            <person name="Myers E.W."/>
            <person name="Venter J.C."/>
        </authorList>
    </citation>
    <scope>NUCLEOTIDE SEQUENCE [LARGE SCALE GENOMIC DNA]</scope>
</reference>
<reference key="9">
    <citation type="journal article" date="2004" name="Genome Res.">
        <title>The status, quality, and expansion of the NIH full-length cDNA project: the Mammalian Gene Collection (MGC).</title>
        <authorList>
            <consortium name="The MGC Project Team"/>
        </authorList>
    </citation>
    <scope>NUCLEOTIDE SEQUENCE [LARGE SCALE MRNA] (ISOFORM 1)</scope>
    <source>
        <tissue>Eye</tissue>
    </source>
</reference>
<reference key="10">
    <citation type="journal article" date="2003" name="Nature">
        <title>Proteomic characterization of the human centrosome by protein correlation profiling.</title>
        <authorList>
            <person name="Andersen J.S."/>
            <person name="Wilkinson C.J."/>
            <person name="Mayor T."/>
            <person name="Mortensen P."/>
            <person name="Nigg E.A."/>
            <person name="Mann M."/>
        </authorList>
    </citation>
    <scope>IDENTIFICATION BY MASS SPECTROMETRY</scope>
    <source>
        <tissue>Lymphoblast</tissue>
    </source>
</reference>
<reference key="11">
    <citation type="journal article" date="2008" name="Biochem. Biophys. Res. Commun.">
        <title>Lysyl-tRNA synthetase interacts with EF1alpha, aspartyl-tRNA synthetase and p38 in vitro.</title>
        <authorList>
            <person name="Guzzo C.M."/>
            <person name="Yang D.C.H."/>
        </authorList>
    </citation>
    <scope>INTERACTION WITH KARS1</scope>
</reference>
<reference key="12">
    <citation type="journal article" date="2009" name="Anal. Chem.">
        <title>Lys-N and trypsin cover complementary parts of the phosphoproteome in a refined SCX-based approach.</title>
        <authorList>
            <person name="Gauci S."/>
            <person name="Helbig A.O."/>
            <person name="Slijper M."/>
            <person name="Krijgsveld J."/>
            <person name="Heck A.J."/>
            <person name="Mohammed S."/>
        </authorList>
    </citation>
    <scope>IDENTIFICATION BY MASS SPECTROMETRY [LARGE SCALE ANALYSIS]</scope>
</reference>
<reference key="13">
    <citation type="journal article" date="2009" name="J. Biol. Chem.">
        <title>Dissection of the structural organization of the aminoacyl-tRNA synthetase complex.</title>
        <authorList>
            <person name="Kaminska M."/>
            <person name="Havrylenko S."/>
            <person name="Decottignies P."/>
            <person name="Gillet S."/>
            <person name="Le Marechal P."/>
            <person name="Negrutskii B."/>
            <person name="Mirande M."/>
        </authorList>
    </citation>
    <scope>SUBUNIT</scope>
    <scope>IDENTIFICATION BY MASS SPECTROMETRY</scope>
</reference>
<reference key="14">
    <citation type="journal article" date="2009" name="J. Biol. Chem.">
        <title>Dynamic Organization of Aminoacyl-tRNA Synthetase Complexes in the Cytoplasm of Human Cells.</title>
        <authorList>
            <person name="Kaminska M."/>
            <person name="Havrylenko S."/>
            <person name="Decottignies P."/>
            <person name="Le Marechal P."/>
            <person name="Negrutskii B."/>
            <person name="Mirande M."/>
        </authorList>
    </citation>
    <scope>SUBCELLULAR LOCATION</scope>
    <scope>SUBUNIT</scope>
</reference>
<reference key="15">
    <citation type="journal article" date="2009" name="Science">
        <title>Lysine acetylation targets protein complexes and co-regulates major cellular functions.</title>
        <authorList>
            <person name="Choudhary C."/>
            <person name="Kumar C."/>
            <person name="Gnad F."/>
            <person name="Nielsen M.L."/>
            <person name="Rehman M."/>
            <person name="Walther T.C."/>
            <person name="Olsen J.V."/>
            <person name="Mann M."/>
        </authorList>
    </citation>
    <scope>ACETYLATION [LARGE SCALE ANALYSIS] AT LYS-74 AND LYS-374</scope>
    <scope>IDENTIFICATION BY MASS SPECTROMETRY [LARGE SCALE ANALYSIS]</scope>
</reference>
<reference key="16">
    <citation type="journal article" date="2011" name="BMC Syst. Biol.">
        <title>Initial characterization of the human central proteome.</title>
        <authorList>
            <person name="Burkard T.R."/>
            <person name="Planyavsky M."/>
            <person name="Kaupe I."/>
            <person name="Breitwieser F.P."/>
            <person name="Buerckstuemmer T."/>
            <person name="Bennett K.L."/>
            <person name="Superti-Furga G."/>
            <person name="Colinge J."/>
        </authorList>
    </citation>
    <scope>IDENTIFICATION BY MASS SPECTROMETRY [LARGE SCALE ANALYSIS]</scope>
</reference>
<reference key="17">
    <citation type="journal article" date="2011" name="Sci. Signal.">
        <title>System-wide temporal characterization of the proteome and phosphoproteome of human embryonic stem cell differentiation.</title>
        <authorList>
            <person name="Rigbolt K.T."/>
            <person name="Prokhorova T.A."/>
            <person name="Akimov V."/>
            <person name="Henningsen J."/>
            <person name="Johansen P.T."/>
            <person name="Kratchmarova I."/>
            <person name="Kassem M."/>
            <person name="Mann M."/>
            <person name="Olsen J.V."/>
            <person name="Blagoev B."/>
        </authorList>
    </citation>
    <scope>PHOSPHORYLATION [LARGE SCALE ANALYSIS] AT SER-249</scope>
    <scope>IDENTIFICATION BY MASS SPECTROMETRY [LARGE SCALE ANALYSIS]</scope>
</reference>
<reference key="18">
    <citation type="journal article" date="2013" name="Am. J. Hum. Genet.">
        <title>Mutations in DARS cause hypomyelination with brain stem and spinal cord involvement and leg spasticity.</title>
        <authorList>
            <person name="Taft R.J."/>
            <person name="Vanderver A."/>
            <person name="Leventer R.J."/>
            <person name="Damiani S.A."/>
            <person name="Simons C."/>
            <person name="Grimmond S.M."/>
            <person name="Miller D."/>
            <person name="Schmidt J."/>
            <person name="Lockhart P.J."/>
            <person name="Pope K."/>
            <person name="Ru K."/>
            <person name="Crawford J."/>
            <person name="Rosser T."/>
            <person name="de Coo I.F."/>
            <person name="Juneja M."/>
            <person name="Verma I.C."/>
            <person name="Prabhakar P."/>
            <person name="Blaser S."/>
            <person name="Raiman J."/>
            <person name="Pouwels P.J."/>
            <person name="Bevova M.R."/>
            <person name="Abbink T.E."/>
            <person name="van der Knaap M.S."/>
            <person name="Wolf N.I."/>
        </authorList>
    </citation>
    <scope>TISSUE SPECIFICITY</scope>
    <scope>VARIANTS HBSL LEU-256; VAL-274; TYR-367; HIS-460; LEU-464; CYS-487; CYS-494 AND GLY-494</scope>
</reference>
<reference key="19">
    <citation type="journal article" date="2013" name="J. Proteome Res.">
        <title>Toward a comprehensive characterization of a human cancer cell phosphoproteome.</title>
        <authorList>
            <person name="Zhou H."/>
            <person name="Di Palma S."/>
            <person name="Preisinger C."/>
            <person name="Peng M."/>
            <person name="Polat A.N."/>
            <person name="Heck A.J."/>
            <person name="Mohammed S."/>
        </authorList>
    </citation>
    <scope>PHOSPHORYLATION [LARGE SCALE ANALYSIS] AT THR-52 AND SER-249</scope>
    <scope>IDENTIFICATION BY MASS SPECTROMETRY [LARGE SCALE ANALYSIS]</scope>
    <source>
        <tissue>Erythroleukemia</tissue>
    </source>
</reference>
<reference key="20">
    <citation type="journal article" date="2014" name="J. Proteomics">
        <title>An enzyme assisted RP-RPLC approach for in-depth analysis of human liver phosphoproteome.</title>
        <authorList>
            <person name="Bian Y."/>
            <person name="Song C."/>
            <person name="Cheng K."/>
            <person name="Dong M."/>
            <person name="Wang F."/>
            <person name="Huang J."/>
            <person name="Sun D."/>
            <person name="Wang L."/>
            <person name="Ye M."/>
            <person name="Zou H."/>
        </authorList>
    </citation>
    <scope>IDENTIFICATION BY MASS SPECTROMETRY [LARGE SCALE ANALYSIS]</scope>
    <source>
        <tissue>Liver</tissue>
    </source>
</reference>
<reference key="21">
    <citation type="journal article" date="2015" name="Proteomics">
        <title>N-terminome analysis of the human mitochondrial proteome.</title>
        <authorList>
            <person name="Vaca Jacome A.S."/>
            <person name="Rabilloud T."/>
            <person name="Schaeffer-Reiss C."/>
            <person name="Rompais M."/>
            <person name="Ayoub D."/>
            <person name="Lane L."/>
            <person name="Bairoch A."/>
            <person name="Van Dorsselaer A."/>
            <person name="Carapito C."/>
        </authorList>
    </citation>
    <scope>IDENTIFICATION BY MASS SPECTROMETRY [LARGE SCALE ANALYSIS]</scope>
</reference>
<reference evidence="11" key="22">
    <citation type="journal article" date="2013" name="Proteins">
        <title>Crystal structure of human cytosolic aspartyl-tRNA synthetase, a component of multi-tRNA synthetase complex.</title>
        <authorList>
            <person name="Kim K.R."/>
            <person name="Park S.H."/>
            <person name="Kim H.S."/>
            <person name="Rhee K.H."/>
            <person name="Kim B.G."/>
            <person name="Kim D.G."/>
            <person name="Park M.S."/>
            <person name="Kim H.J."/>
            <person name="Kim S."/>
            <person name="Han B.W."/>
        </authorList>
    </citation>
    <scope>X-RAY CRYSTALLOGRAPHY (2.24 ANGSTROMS)</scope>
    <scope>SUBUNIT</scope>
</reference>
<gene>
    <name evidence="10" type="primary">DARS1</name>
    <name type="synonym">DARS</name>
    <name type="ORF">PIG40</name>
</gene>
<comment type="function">
    <text evidence="2">Catalyzes the specific attachment of an amino acid to its cognate tRNA in a 2 step reaction: the amino acid (AA) is first activated by ATP to form AA-AMP and then transferred to the acceptor end of the tRNA.</text>
</comment>
<comment type="catalytic activity">
    <reaction evidence="2">
        <text>tRNA(Asp) + L-aspartate + ATP = L-aspartyl-tRNA(Asp) + AMP + diphosphate</text>
        <dbReference type="Rhea" id="RHEA:19649"/>
        <dbReference type="Rhea" id="RHEA-COMP:9660"/>
        <dbReference type="Rhea" id="RHEA-COMP:9678"/>
        <dbReference type="ChEBI" id="CHEBI:29991"/>
        <dbReference type="ChEBI" id="CHEBI:30616"/>
        <dbReference type="ChEBI" id="CHEBI:33019"/>
        <dbReference type="ChEBI" id="CHEBI:78442"/>
        <dbReference type="ChEBI" id="CHEBI:78516"/>
        <dbReference type="ChEBI" id="CHEBI:456215"/>
        <dbReference type="EC" id="6.1.1.12"/>
    </reaction>
</comment>
<comment type="subunit">
    <text evidence="4 5 6">Homodimer (PubMed:23609930). Part of a multisubunit complex that groups tRNA ligases for Arg (RARS1), Asp (DARS1), Gln (QARS1), Ile (IARS1), Leu (LARS1), Lys (KARS1), Met (MARS1) the bifunctional ligase for Glu and Pro (EPRS1) and the auxiliary subunits AIMP1/p43, AIMP2/p38 and EEF1E1/p18 (PubMed:19131329, PubMed:19289464).</text>
</comment>
<comment type="interaction">
    <interactant intactId="EBI-358730">
        <id>P14868</id>
    </interactant>
    <interactant intactId="EBI-745226">
        <id>Q13155</id>
        <label>AIMP2</label>
    </interactant>
    <organismsDiffer>false</organismsDiffer>
    <experiments>10</experiments>
</comment>
<comment type="interaction">
    <interactant intactId="EBI-358730">
        <id>P14868</id>
    </interactant>
    <interactant intactId="EBI-866480">
        <id>Q08050</id>
        <label>FOXM1</label>
    </interactant>
    <organismsDiffer>false</organismsDiffer>
    <experiments>2</experiments>
</comment>
<comment type="interaction">
    <interactant intactId="EBI-358730">
        <id>P14868</id>
    </interactant>
    <interactant intactId="EBI-401755">
        <id>P62993</id>
        <label>GRB2</label>
    </interactant>
    <organismsDiffer>false</organismsDiffer>
    <experiments>2</experiments>
</comment>
<comment type="subcellular location">
    <subcellularLocation>
        <location evidence="5">Cytoplasm</location>
        <location evidence="5">Cytosol</location>
    </subcellularLocation>
</comment>
<comment type="alternative products">
    <event type="alternative splicing"/>
    <isoform>
        <id>P14868-1</id>
        <name>1</name>
        <sequence type="displayed"/>
    </isoform>
    <isoform>
        <id>P14868-2</id>
        <name>2</name>
        <sequence type="described" ref="VSP_056192"/>
    </isoform>
</comment>
<comment type="tissue specificity">
    <text evidence="7">Expression in the developing and adult brain shows similar patterns. Highly expressed in the ventricular and subventricular zones, including hippocampal subfields, the midlateral temporal cortex and the frontal polar cortex. The cerebellum, cerebral cortex, hippocampus, and lateral ventricle show preferential neuronal expression. Expression in the peripheral neurons is evident in the colon.</text>
</comment>
<comment type="disease" evidence="7">
    <disease id="DI-03775">
        <name>Hypomyelination with brainstem and spinal cord involvement and leg spasticity</name>
        <acronym>HBSL</acronym>
        <description>An autosomal recessive leukoencephalopathy characterized by onset in the first year of life of severe spasticity, mainly affecting the lower limbs and resulting in an inability to achieve independent ambulation. Affected individuals show delayed motor development and nystagmus; some may have mild intellectual disability. Brain MRI shows hypomyelination and white matter lesions in the cerebrum, brainstem, cerebellum, and spinal cord.</description>
        <dbReference type="MIM" id="615281"/>
    </disease>
    <text>The disease is caused by variants affecting the gene represented in this entry.</text>
</comment>
<comment type="similarity">
    <text evidence="9">Belongs to the class-II aminoacyl-tRNA synthetase family. Type 2 subfamily.</text>
</comment>
<name>SYDC_HUMAN</name>
<proteinExistence type="evidence at protein level"/>
<protein>
    <recommendedName>
        <fullName evidence="9">Aspartate--tRNA ligase, cytoplasmic</fullName>
        <ecNumber evidence="2">6.1.1.12</ecNumber>
    </recommendedName>
    <alternativeName>
        <fullName>Aspartyl-tRNA synthetase</fullName>
        <shortName>AspRS</shortName>
    </alternativeName>
    <alternativeName>
        <fullName>Cell proliferation-inducing gene 40 protein</fullName>
    </alternativeName>
</protein>